<dbReference type="EC" id="4.2.1.33" evidence="1"/>
<dbReference type="EMBL" id="FM180568">
    <property type="protein sequence ID" value="CAS07624.1"/>
    <property type="molecule type" value="Genomic_DNA"/>
</dbReference>
<dbReference type="RefSeq" id="WP_000818236.1">
    <property type="nucleotide sequence ID" value="NC_011601.1"/>
</dbReference>
<dbReference type="SMR" id="B7UIC1"/>
<dbReference type="KEGG" id="ecg:E2348C_0076"/>
<dbReference type="HOGENOM" id="CLU_081378_0_3_6"/>
<dbReference type="UniPathway" id="UPA00048">
    <property type="reaction ID" value="UER00071"/>
</dbReference>
<dbReference type="Proteomes" id="UP000008205">
    <property type="component" value="Chromosome"/>
</dbReference>
<dbReference type="GO" id="GO:0009316">
    <property type="term" value="C:3-isopropylmalate dehydratase complex"/>
    <property type="evidence" value="ECO:0007669"/>
    <property type="project" value="InterPro"/>
</dbReference>
<dbReference type="GO" id="GO:0003861">
    <property type="term" value="F:3-isopropylmalate dehydratase activity"/>
    <property type="evidence" value="ECO:0007669"/>
    <property type="project" value="UniProtKB-UniRule"/>
</dbReference>
<dbReference type="GO" id="GO:0009098">
    <property type="term" value="P:L-leucine biosynthetic process"/>
    <property type="evidence" value="ECO:0007669"/>
    <property type="project" value="UniProtKB-UniRule"/>
</dbReference>
<dbReference type="CDD" id="cd01577">
    <property type="entry name" value="IPMI_Swivel"/>
    <property type="match status" value="1"/>
</dbReference>
<dbReference type="FunFam" id="3.20.19.10:FF:000003">
    <property type="entry name" value="3-isopropylmalate dehydratase small subunit"/>
    <property type="match status" value="1"/>
</dbReference>
<dbReference type="Gene3D" id="3.20.19.10">
    <property type="entry name" value="Aconitase, domain 4"/>
    <property type="match status" value="1"/>
</dbReference>
<dbReference type="HAMAP" id="MF_01031">
    <property type="entry name" value="LeuD_type1"/>
    <property type="match status" value="1"/>
</dbReference>
<dbReference type="InterPro" id="IPR004431">
    <property type="entry name" value="3-IsopropMal_deHydase_ssu"/>
</dbReference>
<dbReference type="InterPro" id="IPR015928">
    <property type="entry name" value="Aconitase/3IPM_dehydase_swvl"/>
</dbReference>
<dbReference type="InterPro" id="IPR000573">
    <property type="entry name" value="AconitaseA/IPMdHydase_ssu_swvl"/>
</dbReference>
<dbReference type="InterPro" id="IPR033940">
    <property type="entry name" value="IPMI_Swivel"/>
</dbReference>
<dbReference type="InterPro" id="IPR050075">
    <property type="entry name" value="LeuD"/>
</dbReference>
<dbReference type="NCBIfam" id="TIGR00171">
    <property type="entry name" value="leuD"/>
    <property type="match status" value="1"/>
</dbReference>
<dbReference type="NCBIfam" id="NF002458">
    <property type="entry name" value="PRK01641.1"/>
    <property type="match status" value="1"/>
</dbReference>
<dbReference type="PANTHER" id="PTHR43345:SF5">
    <property type="entry name" value="3-ISOPROPYLMALATE DEHYDRATASE SMALL SUBUNIT"/>
    <property type="match status" value="1"/>
</dbReference>
<dbReference type="PANTHER" id="PTHR43345">
    <property type="entry name" value="3-ISOPROPYLMALATE DEHYDRATASE SMALL SUBUNIT 2-RELATED-RELATED"/>
    <property type="match status" value="1"/>
</dbReference>
<dbReference type="Pfam" id="PF00694">
    <property type="entry name" value="Aconitase_C"/>
    <property type="match status" value="1"/>
</dbReference>
<dbReference type="SUPFAM" id="SSF52016">
    <property type="entry name" value="LeuD/IlvD-like"/>
    <property type="match status" value="1"/>
</dbReference>
<keyword id="KW-0028">Amino-acid biosynthesis</keyword>
<keyword id="KW-0100">Branched-chain amino acid biosynthesis</keyword>
<keyword id="KW-0432">Leucine biosynthesis</keyword>
<keyword id="KW-0456">Lyase</keyword>
<keyword id="KW-1185">Reference proteome</keyword>
<name>LEUD_ECO27</name>
<reference key="1">
    <citation type="journal article" date="2009" name="J. Bacteriol.">
        <title>Complete genome sequence and comparative genome analysis of enteropathogenic Escherichia coli O127:H6 strain E2348/69.</title>
        <authorList>
            <person name="Iguchi A."/>
            <person name="Thomson N.R."/>
            <person name="Ogura Y."/>
            <person name="Saunders D."/>
            <person name="Ooka T."/>
            <person name="Henderson I.R."/>
            <person name="Harris D."/>
            <person name="Asadulghani M."/>
            <person name="Kurokawa K."/>
            <person name="Dean P."/>
            <person name="Kenny B."/>
            <person name="Quail M.A."/>
            <person name="Thurston S."/>
            <person name="Dougan G."/>
            <person name="Hayashi T."/>
            <person name="Parkhill J."/>
            <person name="Frankel G."/>
        </authorList>
    </citation>
    <scope>NUCLEOTIDE SEQUENCE [LARGE SCALE GENOMIC DNA]</scope>
    <source>
        <strain>E2348/69 / EPEC</strain>
    </source>
</reference>
<organism>
    <name type="scientific">Escherichia coli O127:H6 (strain E2348/69 / EPEC)</name>
    <dbReference type="NCBI Taxonomy" id="574521"/>
    <lineage>
        <taxon>Bacteria</taxon>
        <taxon>Pseudomonadati</taxon>
        <taxon>Pseudomonadota</taxon>
        <taxon>Gammaproteobacteria</taxon>
        <taxon>Enterobacterales</taxon>
        <taxon>Enterobacteriaceae</taxon>
        <taxon>Escherichia</taxon>
    </lineage>
</organism>
<protein>
    <recommendedName>
        <fullName evidence="1">3-isopropylmalate dehydratase small subunit</fullName>
        <ecNumber evidence="1">4.2.1.33</ecNumber>
    </recommendedName>
    <alternativeName>
        <fullName evidence="1">Alpha-IPM isomerase</fullName>
        <shortName evidence="1">IPMI</shortName>
    </alternativeName>
    <alternativeName>
        <fullName evidence="1">Isopropylmalate isomerase</fullName>
    </alternativeName>
</protein>
<gene>
    <name evidence="1" type="primary">leuD</name>
    <name type="ordered locus">E2348C_0076</name>
</gene>
<evidence type="ECO:0000255" key="1">
    <source>
        <dbReference type="HAMAP-Rule" id="MF_01031"/>
    </source>
</evidence>
<comment type="function">
    <text evidence="1">Catalyzes the isomerization between 2-isopropylmalate and 3-isopropylmalate, via the formation of 2-isopropylmaleate.</text>
</comment>
<comment type="catalytic activity">
    <reaction evidence="1">
        <text>(2R,3S)-3-isopropylmalate = (2S)-2-isopropylmalate</text>
        <dbReference type="Rhea" id="RHEA:32287"/>
        <dbReference type="ChEBI" id="CHEBI:1178"/>
        <dbReference type="ChEBI" id="CHEBI:35121"/>
        <dbReference type="EC" id="4.2.1.33"/>
    </reaction>
</comment>
<comment type="pathway">
    <text evidence="1">Amino-acid biosynthesis; L-leucine biosynthesis; L-leucine from 3-methyl-2-oxobutanoate: step 2/4.</text>
</comment>
<comment type="subunit">
    <text evidence="1">Heterodimer of LeuC and LeuD.</text>
</comment>
<comment type="similarity">
    <text evidence="1">Belongs to the LeuD family. LeuD type 1 subfamily.</text>
</comment>
<accession>B7UIC1</accession>
<proteinExistence type="inferred from homology"/>
<feature type="chain" id="PRO_1000149412" description="3-isopropylmalate dehydratase small subunit">
    <location>
        <begin position="1"/>
        <end position="201"/>
    </location>
</feature>
<sequence length="201" mass="22604">MAEKFIKHTGLVVPLDAANVDTDAIIPKQFLQKVTRTGFGAHLFNDWRFLDEKGQQPNPDFVLNFPQYQGASILLARENFGCGSSREHAPWALTDYGFKVVIAPSFADIFYGNSFNNQLLPVKLSDAEVDELFALVQANPGIHFDVDLEAQEVKAGEKTYRFTIDAFRRHCMMNGLDSIGLTLQHDDAIASYEEKQPAFMR</sequence>